<protein>
    <recommendedName>
        <fullName>Histone H3.3</fullName>
    </recommendedName>
</protein>
<name>H33_CAPAN</name>
<comment type="function">
    <text>Variant histone H3 which replaces conventional H3 in a wide range of nucleosomes in active genes. Constitutes the predominant form of histone H3 in non-dividing cells and is incorporated into chromatin independently of DNA synthesis. Deposited at sites of nucleosomal displacement throughout transcribed genes, suggesting that it represents an epigenetic imprint of transcriptionally active chromatin. Nucleosomes wrap and compact DNA into chromatin, limiting DNA accessibility to the cellular machineries which require DNA as a template. Histones thereby play a central role in transcription regulation, DNA repair, DNA replication and chromosomal stability. DNA accessibility is regulated via a complex set of post-translational modifications of histones, also called histone code, and nucleosome remodeling.</text>
</comment>
<comment type="subunit">
    <text>The nucleosome is a histone octamer containing two molecules each of H2A, H2B, H3 and H4 assembled in one H3-H4 heterotetramer and two H2A-H2B heterodimers. The octamer wraps approximately 147 bp of DNA.</text>
</comment>
<comment type="subcellular location">
    <subcellularLocation>
        <location evidence="1">Nucleus</location>
    </subcellularLocation>
    <subcellularLocation>
        <location evidence="1">Chromosome</location>
    </subcellularLocation>
</comment>
<comment type="PTM">
    <text evidence="1">Acetylation is generally linked to gene activation. Can be acetylated to form H3K9ac, H3K14ac, H3K18ac and H3K23ac. H3K9ac could compete with H3K9me and prevent gene silencing. H3K9ac is restricted to euchromatin (By similarity).</text>
</comment>
<comment type="PTM">
    <text evidence="1">Methylated to form mainly H3K4me, H3K9me, H3K18me, H3K23me, H3K27me and H3K36me. H3K4me1/2/3, H3K9me3, H3K27me3 and H3K36me1/2/3 are typical marks for euchromatin, whereas heterochromatic chromocenters are enriched in H3K9me1/2 and H3K27me1/2. H2BK143ub1 is probably prerequisite for H3K4me (By similarity).</text>
</comment>
<comment type="PTM">
    <text evidence="1">Can be phosphorylated to form H3S10ph, H3T11ph and H3S28ph.</text>
</comment>
<comment type="similarity">
    <text evidence="3">Belongs to the histone H3 family.</text>
</comment>
<comment type="caution">
    <text evidence="3">To ensure consistency between histone entries, we follow the 'Brno' nomenclature for histone modifications, with positions referring to those used in the literature for the 'closest' model organism. Due to slight variations in histone sequences between organisms and to the presence of initiator methionine in UniProtKB/Swiss-Prot sequences, the actual positions of modified amino acids in the sequence generally differ. In this entry the following conventions are used: H3K4me = methylated Lys-5; H3K9ac = acetylated Lys-10; H3K9me = methylated Lys-10; H3S10ph = phosphorylated Ser-11; H3T11ph = phosphorylated Thr-12; H3K14ac = acetylated Lys-15; H3K18ac = acetylated Lys-19; H3K18me = methylated Lys-19; H3K23ac = acetylated Lys-24; H3K23me = methylated Lys-24; H3K27me = methylated Lys-28; H3S28ph = phosphorylated Ser-29; H3K36me = methylated Lys-37.</text>
</comment>
<evidence type="ECO:0000250" key="1"/>
<evidence type="ECO:0000256" key="2">
    <source>
        <dbReference type="SAM" id="MobiDB-lite"/>
    </source>
</evidence>
<evidence type="ECO:0000305" key="3"/>
<reference key="1">
    <citation type="submission" date="2003-11" db="EMBL/GenBank/DDBJ databases">
        <title>Monitoring expression patterns of 2500 hot pepper genes under cold stress by using full-length cDNA microarray.</title>
        <authorList>
            <person name="Kim S."/>
            <person name="Park J."/>
            <person name="Lee K.-W."/>
        </authorList>
    </citation>
    <scope>NUCLEOTIDE SEQUENCE [MRNA]</scope>
</reference>
<accession>Q6RUR1</accession>
<proteinExistence type="evidence at transcript level"/>
<keyword id="KW-0007">Acetylation</keyword>
<keyword id="KW-0158">Chromosome</keyword>
<keyword id="KW-0238">DNA-binding</keyword>
<keyword id="KW-0488">Methylation</keyword>
<keyword id="KW-0544">Nucleosome core</keyword>
<keyword id="KW-0539">Nucleus</keyword>
<keyword id="KW-0597">Phosphoprotein</keyword>
<dbReference type="EMBL" id="AY491505">
    <property type="protein sequence ID" value="AAR84425.1"/>
    <property type="molecule type" value="mRNA"/>
</dbReference>
<dbReference type="RefSeq" id="NP_001385276.1">
    <property type="nucleotide sequence ID" value="NM_001398347.1"/>
</dbReference>
<dbReference type="RefSeq" id="XP_016550185.1">
    <property type="nucleotide sequence ID" value="XM_016694699.2"/>
</dbReference>
<dbReference type="RefSeq" id="XP_016550186.1">
    <property type="nucleotide sequence ID" value="XM_016694700.1"/>
</dbReference>
<dbReference type="RefSeq" id="XP_016568448.1">
    <property type="nucleotide sequence ID" value="XM_016712962.2"/>
</dbReference>
<dbReference type="RefSeq" id="XP_016569188.1">
    <property type="nucleotide sequence ID" value="XM_016713702.1"/>
</dbReference>
<dbReference type="RefSeq" id="XP_016573193.1">
    <property type="nucleotide sequence ID" value="XM_016717707.2"/>
</dbReference>
<dbReference type="SMR" id="Q6RUR1"/>
<dbReference type="EnsemblPlants" id="PHT64949">
    <property type="protein sequence ID" value="PHT64949"/>
    <property type="gene ID" value="T459_29374"/>
</dbReference>
<dbReference type="EnsemblPlants" id="PHT81914">
    <property type="protein sequence ID" value="PHT81914"/>
    <property type="gene ID" value="T459_14929"/>
</dbReference>
<dbReference type="EnsemblPlants" id="PHT84274">
    <property type="protein sequence ID" value="PHT84274"/>
    <property type="gene ID" value="T459_12717"/>
</dbReference>
<dbReference type="EnsemblPlants" id="PHT84919">
    <property type="protein sequence ID" value="PHT84919"/>
    <property type="gene ID" value="T459_13362"/>
</dbReference>
<dbReference type="GeneID" id="107850289"/>
<dbReference type="GeneID" id="107866918"/>
<dbReference type="GeneID" id="107867451"/>
<dbReference type="GeneID" id="107870978"/>
<dbReference type="Gramene" id="PHT64949">
    <property type="protein sequence ID" value="PHT64949"/>
    <property type="gene ID" value="T459_29374"/>
</dbReference>
<dbReference type="Gramene" id="PHT81914">
    <property type="protein sequence ID" value="PHT81914"/>
    <property type="gene ID" value="T459_14929"/>
</dbReference>
<dbReference type="Gramene" id="PHT84274">
    <property type="protein sequence ID" value="PHT84274"/>
    <property type="gene ID" value="T459_12717"/>
</dbReference>
<dbReference type="Gramene" id="PHT84919">
    <property type="protein sequence ID" value="PHT84919"/>
    <property type="gene ID" value="T459_13362"/>
</dbReference>
<dbReference type="KEGG" id="cann:107850289"/>
<dbReference type="KEGG" id="cann:107866918"/>
<dbReference type="KEGG" id="cann:107870978"/>
<dbReference type="OMA" id="CKMARTK"/>
<dbReference type="OrthoDB" id="1881399at2759"/>
<dbReference type="GO" id="GO:0000786">
    <property type="term" value="C:nucleosome"/>
    <property type="evidence" value="ECO:0007669"/>
    <property type="project" value="UniProtKB-KW"/>
</dbReference>
<dbReference type="GO" id="GO:0005634">
    <property type="term" value="C:nucleus"/>
    <property type="evidence" value="ECO:0007669"/>
    <property type="project" value="UniProtKB-SubCell"/>
</dbReference>
<dbReference type="GO" id="GO:0003677">
    <property type="term" value="F:DNA binding"/>
    <property type="evidence" value="ECO:0007669"/>
    <property type="project" value="UniProtKB-KW"/>
</dbReference>
<dbReference type="GO" id="GO:0046982">
    <property type="term" value="F:protein heterodimerization activity"/>
    <property type="evidence" value="ECO:0007669"/>
    <property type="project" value="InterPro"/>
</dbReference>
<dbReference type="GO" id="GO:0030527">
    <property type="term" value="F:structural constituent of chromatin"/>
    <property type="evidence" value="ECO:0007669"/>
    <property type="project" value="InterPro"/>
</dbReference>
<dbReference type="CDD" id="cd22911">
    <property type="entry name" value="HFD_H3"/>
    <property type="match status" value="1"/>
</dbReference>
<dbReference type="FunFam" id="1.10.20.10:FF:000078">
    <property type="entry name" value="Histone H3"/>
    <property type="match status" value="1"/>
</dbReference>
<dbReference type="FunFam" id="1.10.20.10:FF:000044">
    <property type="entry name" value="Histone H3.3"/>
    <property type="match status" value="1"/>
</dbReference>
<dbReference type="Gene3D" id="1.10.20.10">
    <property type="entry name" value="Histone, subunit A"/>
    <property type="match status" value="1"/>
</dbReference>
<dbReference type="InterPro" id="IPR009072">
    <property type="entry name" value="Histone-fold"/>
</dbReference>
<dbReference type="InterPro" id="IPR007125">
    <property type="entry name" value="Histone_H2A/H2B/H3"/>
</dbReference>
<dbReference type="InterPro" id="IPR000164">
    <property type="entry name" value="Histone_H3/CENP-A"/>
</dbReference>
<dbReference type="PANTHER" id="PTHR11426">
    <property type="entry name" value="HISTONE H3"/>
    <property type="match status" value="1"/>
</dbReference>
<dbReference type="Pfam" id="PF00125">
    <property type="entry name" value="Histone"/>
    <property type="match status" value="1"/>
</dbReference>
<dbReference type="PRINTS" id="PR00622">
    <property type="entry name" value="HISTONEH3"/>
</dbReference>
<dbReference type="SMART" id="SM00428">
    <property type="entry name" value="H3"/>
    <property type="match status" value="1"/>
</dbReference>
<dbReference type="SUPFAM" id="SSF47113">
    <property type="entry name" value="Histone-fold"/>
    <property type="match status" value="1"/>
</dbReference>
<dbReference type="PROSITE" id="PS00322">
    <property type="entry name" value="HISTONE_H3_1"/>
    <property type="match status" value="1"/>
</dbReference>
<dbReference type="PROSITE" id="PS00959">
    <property type="entry name" value="HISTONE_H3_2"/>
    <property type="match status" value="1"/>
</dbReference>
<feature type="initiator methionine" description="Removed" evidence="1">
    <location>
        <position position="1"/>
    </location>
</feature>
<feature type="chain" id="PRO_0000221271" description="Histone H3.3">
    <location>
        <begin position="2"/>
        <end position="136"/>
    </location>
</feature>
<feature type="region of interest" description="Disordered" evidence="2">
    <location>
        <begin position="1"/>
        <end position="43"/>
    </location>
</feature>
<feature type="modified residue" description="N6-methylated lysine" evidence="1">
    <location>
        <position position="5"/>
    </location>
</feature>
<feature type="modified residue" description="N6-acetyllysine; alternate" evidence="1">
    <location>
        <position position="10"/>
    </location>
</feature>
<feature type="modified residue" description="N6-methylated lysine; alternate" evidence="1">
    <location>
        <position position="10"/>
    </location>
</feature>
<feature type="modified residue" description="Phosphoserine" evidence="1">
    <location>
        <position position="11"/>
    </location>
</feature>
<feature type="modified residue" description="Phosphothreonine" evidence="1">
    <location>
        <position position="12"/>
    </location>
</feature>
<feature type="modified residue" description="N6-acetyllysine" evidence="1">
    <location>
        <position position="15"/>
    </location>
</feature>
<feature type="modified residue" description="N6-acetyllysine; alternate" evidence="1">
    <location>
        <position position="19"/>
    </location>
</feature>
<feature type="modified residue" description="N6-methylated lysine; alternate" evidence="1">
    <location>
        <position position="19"/>
    </location>
</feature>
<feature type="modified residue" description="N6-acetyllysine; alternate" evidence="1">
    <location>
        <position position="24"/>
    </location>
</feature>
<feature type="modified residue" description="N6-methylated lysine; alternate" evidence="1">
    <location>
        <position position="24"/>
    </location>
</feature>
<feature type="modified residue" description="N6-methylated lysine" evidence="1">
    <location>
        <position position="28"/>
    </location>
</feature>
<feature type="modified residue" description="Phosphoserine" evidence="1">
    <location>
        <position position="29"/>
    </location>
</feature>
<feature type="modified residue" description="N6-methylated lysine" evidence="1">
    <location>
        <position position="37"/>
    </location>
</feature>
<organism>
    <name type="scientific">Capsicum annuum</name>
    <name type="common">Capsicum pepper</name>
    <dbReference type="NCBI Taxonomy" id="4072"/>
    <lineage>
        <taxon>Eukaryota</taxon>
        <taxon>Viridiplantae</taxon>
        <taxon>Streptophyta</taxon>
        <taxon>Embryophyta</taxon>
        <taxon>Tracheophyta</taxon>
        <taxon>Spermatophyta</taxon>
        <taxon>Magnoliopsida</taxon>
        <taxon>eudicotyledons</taxon>
        <taxon>Gunneridae</taxon>
        <taxon>Pentapetalae</taxon>
        <taxon>asterids</taxon>
        <taxon>lamiids</taxon>
        <taxon>Solanales</taxon>
        <taxon>Solanaceae</taxon>
        <taxon>Solanoideae</taxon>
        <taxon>Capsiceae</taxon>
        <taxon>Capsicum</taxon>
    </lineage>
</organism>
<sequence length="136" mass="15406">MARTKQTARKSTGGKAPRKQLATKAARKSAPTTGGVKKPHRYRPGTVALREIRKYQKSTELLIRKLPFQRLVREIAQDFKTDLRFQSHAVLALQEAAEAYLVGLFEDTNLCAIHAKRVTIMPKDIQLARRIRGERA</sequence>